<dbReference type="EMBL" id="AF487269">
    <property type="protein sequence ID" value="AAQ06242.1"/>
    <property type="molecule type" value="mRNA"/>
</dbReference>
<dbReference type="EMBL" id="AC010924">
    <property type="protein sequence ID" value="AAF18504.1"/>
    <property type="molecule type" value="Genomic_DNA"/>
</dbReference>
<dbReference type="EMBL" id="CP002684">
    <property type="protein sequence ID" value="AEE29406.1"/>
    <property type="molecule type" value="Genomic_DNA"/>
</dbReference>
<dbReference type="EMBL" id="AY120744">
    <property type="protein sequence ID" value="AAM53302.1"/>
    <property type="status" value="ALT_FRAME"/>
    <property type="molecule type" value="mRNA"/>
</dbReference>
<dbReference type="EMBL" id="BT025624">
    <property type="protein sequence ID" value="ABF59042.1"/>
    <property type="molecule type" value="mRNA"/>
</dbReference>
<dbReference type="PIR" id="E86295">
    <property type="entry name" value="E86295"/>
</dbReference>
<dbReference type="RefSeq" id="NP_173059.1">
    <molecule id="Q9S9M8-1"/>
    <property type="nucleotide sequence ID" value="NM_101475.3"/>
</dbReference>
<dbReference type="SMR" id="Q9S9M8"/>
<dbReference type="FunCoup" id="Q9S9M8">
    <property type="interactions" value="207"/>
</dbReference>
<dbReference type="IntAct" id="Q9S9M8">
    <property type="interactions" value="1"/>
</dbReference>
<dbReference type="STRING" id="3702.Q9S9M8"/>
<dbReference type="PaxDb" id="3702-AT1G16070.2"/>
<dbReference type="EnsemblPlants" id="AT1G16070.1">
    <molecule id="Q9S9M8-1"/>
    <property type="protein sequence ID" value="AT1G16070.1"/>
    <property type="gene ID" value="AT1G16070"/>
</dbReference>
<dbReference type="GeneID" id="838177"/>
<dbReference type="Gramene" id="AT1G16070.1">
    <molecule id="Q9S9M8-1"/>
    <property type="protein sequence ID" value="AT1G16070.1"/>
    <property type="gene ID" value="AT1G16070"/>
</dbReference>
<dbReference type="KEGG" id="ath:AT1G16070"/>
<dbReference type="Araport" id="AT1G16070"/>
<dbReference type="TAIR" id="AT1G16070">
    <property type="gene designation" value="TLP8"/>
</dbReference>
<dbReference type="eggNOG" id="KOG2502">
    <property type="taxonomic scope" value="Eukaryota"/>
</dbReference>
<dbReference type="HOGENOM" id="CLU_054123_2_0_1"/>
<dbReference type="InParanoid" id="Q9S9M8"/>
<dbReference type="OMA" id="LMGSKYQ"/>
<dbReference type="PhylomeDB" id="Q9S9M8"/>
<dbReference type="PRO" id="PR:Q9S9M8"/>
<dbReference type="Proteomes" id="UP000006548">
    <property type="component" value="Chromosome 1"/>
</dbReference>
<dbReference type="ExpressionAtlas" id="Q9S9M8">
    <property type="expression patterns" value="baseline and differential"/>
</dbReference>
<dbReference type="Gene3D" id="3.20.90.10">
    <property type="entry name" value="Tubby Protein, Chain A"/>
    <property type="match status" value="1"/>
</dbReference>
<dbReference type="InterPro" id="IPR025659">
    <property type="entry name" value="Tubby-like_C"/>
</dbReference>
<dbReference type="InterPro" id="IPR000007">
    <property type="entry name" value="Tubby_C"/>
</dbReference>
<dbReference type="PANTHER" id="PTHR16517:SF131">
    <property type="entry name" value="TUBBY-LIKE PROTEIN 8"/>
    <property type="match status" value="1"/>
</dbReference>
<dbReference type="PANTHER" id="PTHR16517">
    <property type="entry name" value="TUBBY-RELATED"/>
    <property type="match status" value="1"/>
</dbReference>
<dbReference type="Pfam" id="PF01167">
    <property type="entry name" value="Tub"/>
    <property type="match status" value="1"/>
</dbReference>
<dbReference type="PRINTS" id="PR01573">
    <property type="entry name" value="SUPERTUBBY"/>
</dbReference>
<dbReference type="SUPFAM" id="SSF54518">
    <property type="entry name" value="Tubby C-terminal domain-like"/>
    <property type="match status" value="1"/>
</dbReference>
<name>TLP8_ARATH</name>
<accession>Q9S9M8</accession>
<accession>Q8L848</accession>
<evidence type="ECO:0000256" key="1">
    <source>
        <dbReference type="SAM" id="MobiDB-lite"/>
    </source>
</evidence>
<evidence type="ECO:0000269" key="2">
    <source>
    </source>
</evidence>
<evidence type="ECO:0000303" key="3">
    <source>
    </source>
</evidence>
<evidence type="ECO:0000305" key="4"/>
<evidence type="ECO:0000312" key="5">
    <source>
        <dbReference type="Araport" id="AT1G16070"/>
    </source>
</evidence>
<evidence type="ECO:0000312" key="6">
    <source>
        <dbReference type="EMBL" id="AAF18504.1"/>
    </source>
</evidence>
<protein>
    <recommendedName>
        <fullName evidence="3">Tubby-like protein 8</fullName>
        <shortName evidence="3">AtTLP8</shortName>
    </recommendedName>
</protein>
<keyword id="KW-0025">Alternative splicing</keyword>
<keyword id="KW-1185">Reference proteome</keyword>
<proteinExistence type="evidence at transcript level"/>
<reference key="1">
    <citation type="journal article" date="2004" name="Plant Physiol.">
        <title>Molecular analyses of the Arabidopsis TUBBY-like protein gene family.</title>
        <authorList>
            <person name="Lai C.-P."/>
            <person name="Lee C.-L."/>
            <person name="Chen P.-H."/>
            <person name="Wu S.-H."/>
            <person name="Yang C.-C."/>
            <person name="Shaw J.-F."/>
        </authorList>
    </citation>
    <scope>NUCLEOTIDE SEQUENCE [MRNA]</scope>
    <scope>TISSUE SPECIFICITY</scope>
    <scope>GENE FAMILY</scope>
    <scope>NOMENCLATURE</scope>
</reference>
<reference key="2">
    <citation type="journal article" date="2000" name="Nature">
        <title>Sequence and analysis of chromosome 1 of the plant Arabidopsis thaliana.</title>
        <authorList>
            <person name="Theologis A."/>
            <person name="Ecker J.R."/>
            <person name="Palm C.J."/>
            <person name="Federspiel N.A."/>
            <person name="Kaul S."/>
            <person name="White O."/>
            <person name="Alonso J."/>
            <person name="Altafi H."/>
            <person name="Araujo R."/>
            <person name="Bowman C.L."/>
            <person name="Brooks S.Y."/>
            <person name="Buehler E."/>
            <person name="Chan A."/>
            <person name="Chao Q."/>
            <person name="Chen H."/>
            <person name="Cheuk R.F."/>
            <person name="Chin C.W."/>
            <person name="Chung M.K."/>
            <person name="Conn L."/>
            <person name="Conway A.B."/>
            <person name="Conway A.R."/>
            <person name="Creasy T.H."/>
            <person name="Dewar K."/>
            <person name="Dunn P."/>
            <person name="Etgu P."/>
            <person name="Feldblyum T.V."/>
            <person name="Feng J.-D."/>
            <person name="Fong B."/>
            <person name="Fujii C.Y."/>
            <person name="Gill J.E."/>
            <person name="Goldsmith A.D."/>
            <person name="Haas B."/>
            <person name="Hansen N.F."/>
            <person name="Hughes B."/>
            <person name="Huizar L."/>
            <person name="Hunter J.L."/>
            <person name="Jenkins J."/>
            <person name="Johnson-Hopson C."/>
            <person name="Khan S."/>
            <person name="Khaykin E."/>
            <person name="Kim C.J."/>
            <person name="Koo H.L."/>
            <person name="Kremenetskaia I."/>
            <person name="Kurtz D.B."/>
            <person name="Kwan A."/>
            <person name="Lam B."/>
            <person name="Langin-Hooper S."/>
            <person name="Lee A."/>
            <person name="Lee J.M."/>
            <person name="Lenz C.A."/>
            <person name="Li J.H."/>
            <person name="Li Y.-P."/>
            <person name="Lin X."/>
            <person name="Liu S.X."/>
            <person name="Liu Z.A."/>
            <person name="Luros J.S."/>
            <person name="Maiti R."/>
            <person name="Marziali A."/>
            <person name="Militscher J."/>
            <person name="Miranda M."/>
            <person name="Nguyen M."/>
            <person name="Nierman W.C."/>
            <person name="Osborne B.I."/>
            <person name="Pai G."/>
            <person name="Peterson J."/>
            <person name="Pham P.K."/>
            <person name="Rizzo M."/>
            <person name="Rooney T."/>
            <person name="Rowley D."/>
            <person name="Sakano H."/>
            <person name="Salzberg S.L."/>
            <person name="Schwartz J.R."/>
            <person name="Shinn P."/>
            <person name="Southwick A.M."/>
            <person name="Sun H."/>
            <person name="Tallon L.J."/>
            <person name="Tambunga G."/>
            <person name="Toriumi M.J."/>
            <person name="Town C.D."/>
            <person name="Utterback T."/>
            <person name="Van Aken S."/>
            <person name="Vaysberg M."/>
            <person name="Vysotskaia V.S."/>
            <person name="Walker M."/>
            <person name="Wu D."/>
            <person name="Yu G."/>
            <person name="Fraser C.M."/>
            <person name="Venter J.C."/>
            <person name="Davis R.W."/>
        </authorList>
    </citation>
    <scope>NUCLEOTIDE SEQUENCE [LARGE SCALE GENOMIC DNA]</scope>
    <source>
        <strain>cv. Columbia</strain>
    </source>
</reference>
<reference key="3">
    <citation type="journal article" date="2017" name="Plant J.">
        <title>Araport11: a complete reannotation of the Arabidopsis thaliana reference genome.</title>
        <authorList>
            <person name="Cheng C.Y."/>
            <person name="Krishnakumar V."/>
            <person name="Chan A.P."/>
            <person name="Thibaud-Nissen F."/>
            <person name="Schobel S."/>
            <person name="Town C.D."/>
        </authorList>
    </citation>
    <scope>GENOME REANNOTATION</scope>
    <source>
        <strain>cv. Columbia</strain>
    </source>
</reference>
<reference key="4">
    <citation type="journal article" date="2003" name="Science">
        <title>Empirical analysis of transcriptional activity in the Arabidopsis genome.</title>
        <authorList>
            <person name="Yamada K."/>
            <person name="Lim J."/>
            <person name="Dale J.M."/>
            <person name="Chen H."/>
            <person name="Shinn P."/>
            <person name="Palm C.J."/>
            <person name="Southwick A.M."/>
            <person name="Wu H.C."/>
            <person name="Kim C.J."/>
            <person name="Nguyen M."/>
            <person name="Pham P.K."/>
            <person name="Cheuk R.F."/>
            <person name="Karlin-Newmann G."/>
            <person name="Liu S.X."/>
            <person name="Lam B."/>
            <person name="Sakano H."/>
            <person name="Wu T."/>
            <person name="Yu G."/>
            <person name="Miranda M."/>
            <person name="Quach H.L."/>
            <person name="Tripp M."/>
            <person name="Chang C.H."/>
            <person name="Lee J.M."/>
            <person name="Toriumi M.J."/>
            <person name="Chan M.M."/>
            <person name="Tang C.C."/>
            <person name="Onodera C.S."/>
            <person name="Deng J.M."/>
            <person name="Akiyama K."/>
            <person name="Ansari Y."/>
            <person name="Arakawa T."/>
            <person name="Banh J."/>
            <person name="Banno F."/>
            <person name="Bowser L."/>
            <person name="Brooks S.Y."/>
            <person name="Carninci P."/>
            <person name="Chao Q."/>
            <person name="Choy N."/>
            <person name="Enju A."/>
            <person name="Goldsmith A.D."/>
            <person name="Gurjal M."/>
            <person name="Hansen N.F."/>
            <person name="Hayashizaki Y."/>
            <person name="Johnson-Hopson C."/>
            <person name="Hsuan V.W."/>
            <person name="Iida K."/>
            <person name="Karnes M."/>
            <person name="Khan S."/>
            <person name="Koesema E."/>
            <person name="Ishida J."/>
            <person name="Jiang P.X."/>
            <person name="Jones T."/>
            <person name="Kawai J."/>
            <person name="Kamiya A."/>
            <person name="Meyers C."/>
            <person name="Nakajima M."/>
            <person name="Narusaka M."/>
            <person name="Seki M."/>
            <person name="Sakurai T."/>
            <person name="Satou M."/>
            <person name="Tamse R."/>
            <person name="Vaysberg M."/>
            <person name="Wallender E.K."/>
            <person name="Wong C."/>
            <person name="Yamamura Y."/>
            <person name="Yuan S."/>
            <person name="Shinozaki K."/>
            <person name="Davis R.W."/>
            <person name="Theologis A."/>
            <person name="Ecker J.R."/>
        </authorList>
    </citation>
    <scope>NUCLEOTIDE SEQUENCE [LARGE SCALE MRNA] OF 1-363</scope>
    <source>
        <strain>cv. Columbia</strain>
    </source>
</reference>
<reference key="5">
    <citation type="submission" date="2006-05" db="EMBL/GenBank/DDBJ databases">
        <title>Arabidopsis ORF clones.</title>
        <authorList>
            <person name="Shinn P."/>
            <person name="Chen H."/>
            <person name="Kim C.J."/>
            <person name="Quinitio C."/>
            <person name="Ecker J.R."/>
        </authorList>
    </citation>
    <scope>NUCLEOTIDE SEQUENCE [LARGE SCALE MRNA]</scope>
    <source>
        <strain>cv. Columbia</strain>
    </source>
</reference>
<comment type="alternative products">
    <event type="alternative splicing"/>
    <isoform>
        <id>Q9S9M8-1</id>
        <name>1</name>
        <sequence type="displayed"/>
    </isoform>
    <text>A number of isoforms are produced. According to EST sequences.</text>
</comment>
<comment type="tissue specificity">
    <text evidence="2">Mostly expressed in roots, flowers and siliques.</text>
</comment>
<comment type="similarity">
    <text evidence="4">Belongs to the TUB family.</text>
</comment>
<comment type="sequence caution" evidence="4">
    <conflict type="frameshift">
        <sequence resource="EMBL-CDS" id="AAM53302"/>
    </conflict>
</comment>
<gene>
    <name evidence="4" type="primary">TULP8</name>
    <name evidence="3" type="synonym">TLP8</name>
    <name evidence="5" type="ordered locus">At1g16070</name>
    <name evidence="6" type="ORF">T24D18.17</name>
</gene>
<organism>
    <name type="scientific">Arabidopsis thaliana</name>
    <name type="common">Mouse-ear cress</name>
    <dbReference type="NCBI Taxonomy" id="3702"/>
    <lineage>
        <taxon>Eukaryota</taxon>
        <taxon>Viridiplantae</taxon>
        <taxon>Streptophyta</taxon>
        <taxon>Embryophyta</taxon>
        <taxon>Tracheophyta</taxon>
        <taxon>Spermatophyta</taxon>
        <taxon>Magnoliopsida</taxon>
        <taxon>eudicotyledons</taxon>
        <taxon>Gunneridae</taxon>
        <taxon>Pentapetalae</taxon>
        <taxon>rosids</taxon>
        <taxon>malvids</taxon>
        <taxon>Brassicales</taxon>
        <taxon>Brassicaceae</taxon>
        <taxon>Camelineae</taxon>
        <taxon>Arabidopsis</taxon>
    </lineage>
</organism>
<feature type="chain" id="PRO_0000272236" description="Tubby-like protein 8">
    <location>
        <begin position="1"/>
        <end position="397"/>
    </location>
</feature>
<feature type="region of interest" description="Disordered" evidence="1">
    <location>
        <begin position="1"/>
        <end position="46"/>
    </location>
</feature>
<feature type="compositionally biased region" description="Basic and acidic residues" evidence="1">
    <location>
        <begin position="1"/>
        <end position="16"/>
    </location>
</feature>
<feature type="compositionally biased region" description="Polar residues" evidence="1">
    <location>
        <begin position="17"/>
        <end position="28"/>
    </location>
</feature>
<feature type="sequence conflict" description="In Ref. 4; AAM53302." evidence="4" ref="4">
    <original>Q</original>
    <variation>R</variation>
    <location>
        <position position="346"/>
    </location>
</feature>
<sequence>MAGSRKVNDLLEENKGNVDTITGSLSTQKGEDKENVSPEKVSTSVETRKLDRALKSQSMKGNSGFPTEVTNFKSFSTGGRTALKQSSLQACMQKNSEVDKSSFGMKTWTSVDSEHSSSLKVWEFSDSEAAPASSWSTLPNRALLCKTLPLDVGRCTCLIVKEQSPEGLSHGSVYSLYTHEGRGRKDRKLAVAYHSRRNGKSIFRVAQNVKGLLCSSDESYVGSMTANLLGSKYYIWDKGVRVGSVGKMVKPLLSVVIFTPTITTWTGSYRRMRTLLPKQQPMQKNNNKQVQQASKLPLDWLENKEKIQKLCSRIPHYNKISKQHELDFRDRGRTGLRIQSSVKNFQLTLTETPRQTILQMGRVDKARYVIDFRYPFSGYQAFCICLASIDSKLCCTV</sequence>